<reference key="1">
    <citation type="journal article" date="2009" name="PLoS ONE">
        <title>Genome analysis of the anaerobic thermohalophilic bacterium Halothermothrix orenii.</title>
        <authorList>
            <person name="Mavromatis K."/>
            <person name="Ivanova N."/>
            <person name="Anderson I."/>
            <person name="Lykidis A."/>
            <person name="Hooper S.D."/>
            <person name="Sun H."/>
            <person name="Kunin V."/>
            <person name="Lapidus A."/>
            <person name="Hugenholtz P."/>
            <person name="Patel B."/>
            <person name="Kyrpides N.C."/>
        </authorList>
    </citation>
    <scope>NUCLEOTIDE SEQUENCE [LARGE SCALE GENOMIC DNA]</scope>
    <source>
        <strain>H 168 / OCM 544 / DSM 9562</strain>
    </source>
</reference>
<protein>
    <recommendedName>
        <fullName evidence="1">Dihydroxy-acid dehydratase</fullName>
        <shortName evidence="1">DAD</shortName>
        <ecNumber evidence="1">4.2.1.9</ecNumber>
    </recommendedName>
</protein>
<sequence>MGSETITQGFKRAPHRSLLYALGLDEKELEKPIIGIASSYSEIIPGHKHLDKIAEAVKYGVYSAGGTPVIFSTIGVCDGIAMGHSGMKYSLASREIIADSVETVVRAHQFDGLVLVPNCDKIVPGMLMAAARLDIPAIVVSGGPMLAGDYQGKSLDLHNVFEAVGEVKAGKITEGELENIEKAACPGCGSCAGMFTANSMNCLTEVLGMALPGNGTIPAVYAERIRLAKKSGRQIINLVEKNIKPSDIMTREAFKNAICVDMALGCSTNTALHLPAIAHEAGLDLELDLFNDISRKVPHICSLTPAGIYHIEDLYRVGGIPAVMKELSEKDLIQLDQLTVTGDTVGTNISRVGYIDHKIIRPVSNPYHNQGGLAVLKGNIAPGGSVVKQAAVADSMMVHRGPARVFKGEEEAVDAIINGQISEGDVVVITYEGPRGGPGMREMLTPTSALAGLGLDDKVALITDGRFSGATRGAAIGHVSPEAASGGPIGIIQDGDIIEIDIPAKSLNVDISEEEFEKRMSNFNPELPDISGYLGRYAKHVSSASTGAVLE</sequence>
<name>ILVD_HALOH</name>
<evidence type="ECO:0000255" key="1">
    <source>
        <dbReference type="HAMAP-Rule" id="MF_00012"/>
    </source>
</evidence>
<dbReference type="EC" id="4.2.1.9" evidence="1"/>
<dbReference type="EMBL" id="CP001098">
    <property type="protein sequence ID" value="ACL69836.1"/>
    <property type="molecule type" value="Genomic_DNA"/>
</dbReference>
<dbReference type="RefSeq" id="WP_012636021.1">
    <property type="nucleotide sequence ID" value="NC_011899.1"/>
</dbReference>
<dbReference type="SMR" id="B8CX17"/>
<dbReference type="STRING" id="373903.Hore_10820"/>
<dbReference type="KEGG" id="hor:Hore_10820"/>
<dbReference type="eggNOG" id="COG0129">
    <property type="taxonomic scope" value="Bacteria"/>
</dbReference>
<dbReference type="HOGENOM" id="CLU_014271_4_2_9"/>
<dbReference type="OrthoDB" id="9807077at2"/>
<dbReference type="UniPathway" id="UPA00047">
    <property type="reaction ID" value="UER00057"/>
</dbReference>
<dbReference type="UniPathway" id="UPA00049">
    <property type="reaction ID" value="UER00061"/>
</dbReference>
<dbReference type="Proteomes" id="UP000000719">
    <property type="component" value="Chromosome"/>
</dbReference>
<dbReference type="GO" id="GO:0005829">
    <property type="term" value="C:cytosol"/>
    <property type="evidence" value="ECO:0007669"/>
    <property type="project" value="TreeGrafter"/>
</dbReference>
<dbReference type="GO" id="GO:0051537">
    <property type="term" value="F:2 iron, 2 sulfur cluster binding"/>
    <property type="evidence" value="ECO:0007669"/>
    <property type="project" value="UniProtKB-UniRule"/>
</dbReference>
<dbReference type="GO" id="GO:0004160">
    <property type="term" value="F:dihydroxy-acid dehydratase activity"/>
    <property type="evidence" value="ECO:0007669"/>
    <property type="project" value="UniProtKB-UniRule"/>
</dbReference>
<dbReference type="GO" id="GO:0000287">
    <property type="term" value="F:magnesium ion binding"/>
    <property type="evidence" value="ECO:0007669"/>
    <property type="project" value="UniProtKB-UniRule"/>
</dbReference>
<dbReference type="GO" id="GO:0009097">
    <property type="term" value="P:isoleucine biosynthetic process"/>
    <property type="evidence" value="ECO:0007669"/>
    <property type="project" value="UniProtKB-UniRule"/>
</dbReference>
<dbReference type="GO" id="GO:0009099">
    <property type="term" value="P:L-valine biosynthetic process"/>
    <property type="evidence" value="ECO:0007669"/>
    <property type="project" value="UniProtKB-UniRule"/>
</dbReference>
<dbReference type="FunFam" id="3.50.30.80:FF:000001">
    <property type="entry name" value="Dihydroxy-acid dehydratase"/>
    <property type="match status" value="1"/>
</dbReference>
<dbReference type="Gene3D" id="3.50.30.80">
    <property type="entry name" value="IlvD/EDD C-terminal domain-like"/>
    <property type="match status" value="1"/>
</dbReference>
<dbReference type="HAMAP" id="MF_00012">
    <property type="entry name" value="IlvD"/>
    <property type="match status" value="1"/>
</dbReference>
<dbReference type="InterPro" id="IPR042096">
    <property type="entry name" value="Dihydro-acid_dehy_C"/>
</dbReference>
<dbReference type="InterPro" id="IPR004404">
    <property type="entry name" value="DihydroxyA_deHydtase"/>
</dbReference>
<dbReference type="InterPro" id="IPR020558">
    <property type="entry name" value="DiOHA_6PGluconate_deHydtase_CS"/>
</dbReference>
<dbReference type="InterPro" id="IPR056740">
    <property type="entry name" value="ILV_EDD_C"/>
</dbReference>
<dbReference type="InterPro" id="IPR000581">
    <property type="entry name" value="ILV_EDD_N"/>
</dbReference>
<dbReference type="InterPro" id="IPR037237">
    <property type="entry name" value="IlvD/EDD_N"/>
</dbReference>
<dbReference type="NCBIfam" id="TIGR00110">
    <property type="entry name" value="ilvD"/>
    <property type="match status" value="1"/>
</dbReference>
<dbReference type="NCBIfam" id="NF002068">
    <property type="entry name" value="PRK00911.1"/>
    <property type="match status" value="1"/>
</dbReference>
<dbReference type="PANTHER" id="PTHR43661">
    <property type="entry name" value="D-XYLONATE DEHYDRATASE"/>
    <property type="match status" value="1"/>
</dbReference>
<dbReference type="PANTHER" id="PTHR43661:SF3">
    <property type="entry name" value="D-XYLONATE DEHYDRATASE YAGF-RELATED"/>
    <property type="match status" value="1"/>
</dbReference>
<dbReference type="Pfam" id="PF24877">
    <property type="entry name" value="ILV_EDD_C"/>
    <property type="match status" value="1"/>
</dbReference>
<dbReference type="Pfam" id="PF00920">
    <property type="entry name" value="ILVD_EDD_N"/>
    <property type="match status" value="1"/>
</dbReference>
<dbReference type="SUPFAM" id="SSF143975">
    <property type="entry name" value="IlvD/EDD N-terminal domain-like"/>
    <property type="match status" value="1"/>
</dbReference>
<dbReference type="SUPFAM" id="SSF52016">
    <property type="entry name" value="LeuD/IlvD-like"/>
    <property type="match status" value="1"/>
</dbReference>
<dbReference type="PROSITE" id="PS00886">
    <property type="entry name" value="ILVD_EDD_1"/>
    <property type="match status" value="1"/>
</dbReference>
<dbReference type="PROSITE" id="PS00887">
    <property type="entry name" value="ILVD_EDD_2"/>
    <property type="match status" value="1"/>
</dbReference>
<feature type="chain" id="PRO_1000190668" description="Dihydroxy-acid dehydratase">
    <location>
        <begin position="1"/>
        <end position="551"/>
    </location>
</feature>
<feature type="active site" description="Proton acceptor" evidence="1">
    <location>
        <position position="468"/>
    </location>
</feature>
<feature type="binding site" evidence="1">
    <location>
        <position position="78"/>
    </location>
    <ligand>
        <name>Mg(2+)</name>
        <dbReference type="ChEBI" id="CHEBI:18420"/>
    </ligand>
</feature>
<feature type="binding site" evidence="1">
    <location>
        <position position="119"/>
    </location>
    <ligand>
        <name>[2Fe-2S] cluster</name>
        <dbReference type="ChEBI" id="CHEBI:190135"/>
    </ligand>
</feature>
<feature type="binding site" evidence="1">
    <location>
        <position position="120"/>
    </location>
    <ligand>
        <name>Mg(2+)</name>
        <dbReference type="ChEBI" id="CHEBI:18420"/>
    </ligand>
</feature>
<feature type="binding site" description="via carbamate group" evidence="1">
    <location>
        <position position="121"/>
    </location>
    <ligand>
        <name>Mg(2+)</name>
        <dbReference type="ChEBI" id="CHEBI:18420"/>
    </ligand>
</feature>
<feature type="binding site" evidence="1">
    <location>
        <position position="191"/>
    </location>
    <ligand>
        <name>[2Fe-2S] cluster</name>
        <dbReference type="ChEBI" id="CHEBI:190135"/>
    </ligand>
</feature>
<feature type="binding site" evidence="1">
    <location>
        <position position="442"/>
    </location>
    <ligand>
        <name>Mg(2+)</name>
        <dbReference type="ChEBI" id="CHEBI:18420"/>
    </ligand>
</feature>
<feature type="modified residue" description="N6-carboxylysine" evidence="1">
    <location>
        <position position="121"/>
    </location>
</feature>
<proteinExistence type="inferred from homology"/>
<comment type="function">
    <text evidence="1">Functions in the biosynthesis of branched-chain amino acids. Catalyzes the dehydration of (2R,3R)-2,3-dihydroxy-3-methylpentanoate (2,3-dihydroxy-3-methylvalerate) into 2-oxo-3-methylpentanoate (2-oxo-3-methylvalerate) and of (2R)-2,3-dihydroxy-3-methylbutanoate (2,3-dihydroxyisovalerate) into 2-oxo-3-methylbutanoate (2-oxoisovalerate), the penultimate precursor to L-isoleucine and L-valine, respectively.</text>
</comment>
<comment type="catalytic activity">
    <reaction evidence="1">
        <text>(2R)-2,3-dihydroxy-3-methylbutanoate = 3-methyl-2-oxobutanoate + H2O</text>
        <dbReference type="Rhea" id="RHEA:24809"/>
        <dbReference type="ChEBI" id="CHEBI:11851"/>
        <dbReference type="ChEBI" id="CHEBI:15377"/>
        <dbReference type="ChEBI" id="CHEBI:49072"/>
        <dbReference type="EC" id="4.2.1.9"/>
    </reaction>
    <physiologicalReaction direction="left-to-right" evidence="1">
        <dbReference type="Rhea" id="RHEA:24810"/>
    </physiologicalReaction>
</comment>
<comment type="catalytic activity">
    <reaction evidence="1">
        <text>(2R,3R)-2,3-dihydroxy-3-methylpentanoate = (S)-3-methyl-2-oxopentanoate + H2O</text>
        <dbReference type="Rhea" id="RHEA:27694"/>
        <dbReference type="ChEBI" id="CHEBI:15377"/>
        <dbReference type="ChEBI" id="CHEBI:35146"/>
        <dbReference type="ChEBI" id="CHEBI:49258"/>
        <dbReference type="EC" id="4.2.1.9"/>
    </reaction>
    <physiologicalReaction direction="left-to-right" evidence="1">
        <dbReference type="Rhea" id="RHEA:27695"/>
    </physiologicalReaction>
</comment>
<comment type="cofactor">
    <cofactor evidence="1">
        <name>[2Fe-2S] cluster</name>
        <dbReference type="ChEBI" id="CHEBI:190135"/>
    </cofactor>
    <text evidence="1">Binds 1 [2Fe-2S] cluster per subunit. This cluster acts as a Lewis acid cofactor.</text>
</comment>
<comment type="cofactor">
    <cofactor evidence="1">
        <name>Mg(2+)</name>
        <dbReference type="ChEBI" id="CHEBI:18420"/>
    </cofactor>
</comment>
<comment type="pathway">
    <text evidence="1">Amino-acid biosynthesis; L-isoleucine biosynthesis; L-isoleucine from 2-oxobutanoate: step 3/4.</text>
</comment>
<comment type="pathway">
    <text evidence="1">Amino-acid biosynthesis; L-valine biosynthesis; L-valine from pyruvate: step 3/4.</text>
</comment>
<comment type="subunit">
    <text evidence="1">Homodimer.</text>
</comment>
<comment type="similarity">
    <text evidence="1">Belongs to the IlvD/Edd family.</text>
</comment>
<accession>B8CX17</accession>
<organism>
    <name type="scientific">Halothermothrix orenii (strain H 168 / OCM 544 / DSM 9562)</name>
    <dbReference type="NCBI Taxonomy" id="373903"/>
    <lineage>
        <taxon>Bacteria</taxon>
        <taxon>Bacillati</taxon>
        <taxon>Bacillota</taxon>
        <taxon>Clostridia</taxon>
        <taxon>Halanaerobiales</taxon>
        <taxon>Halothermotrichaceae</taxon>
        <taxon>Halothermothrix</taxon>
    </lineage>
</organism>
<gene>
    <name evidence="1" type="primary">ilvD</name>
    <name type="ordered locus">Hore_10820</name>
</gene>
<keyword id="KW-0001">2Fe-2S</keyword>
<keyword id="KW-0028">Amino-acid biosynthesis</keyword>
<keyword id="KW-0100">Branched-chain amino acid biosynthesis</keyword>
<keyword id="KW-0408">Iron</keyword>
<keyword id="KW-0411">Iron-sulfur</keyword>
<keyword id="KW-0456">Lyase</keyword>
<keyword id="KW-0460">Magnesium</keyword>
<keyword id="KW-0479">Metal-binding</keyword>
<keyword id="KW-1185">Reference proteome</keyword>